<comment type="function">
    <text evidence="1">The beta subunit is responsible for the synthesis of L-tryptophan from indole and L-serine.</text>
</comment>
<comment type="catalytic activity">
    <reaction>
        <text>(1S,2R)-1-C-(indol-3-yl)glycerol 3-phosphate + L-serine = D-glyceraldehyde 3-phosphate + L-tryptophan + H2O</text>
        <dbReference type="Rhea" id="RHEA:10532"/>
        <dbReference type="ChEBI" id="CHEBI:15377"/>
        <dbReference type="ChEBI" id="CHEBI:33384"/>
        <dbReference type="ChEBI" id="CHEBI:57912"/>
        <dbReference type="ChEBI" id="CHEBI:58866"/>
        <dbReference type="ChEBI" id="CHEBI:59776"/>
        <dbReference type="EC" id="4.2.1.20"/>
    </reaction>
</comment>
<comment type="cofactor">
    <cofactor evidence="1">
        <name>pyridoxal 5'-phosphate</name>
        <dbReference type="ChEBI" id="CHEBI:597326"/>
    </cofactor>
</comment>
<comment type="pathway">
    <text>Amino-acid biosynthesis; L-tryptophan biosynthesis; L-tryptophan from chorismate: step 5/5.</text>
</comment>
<comment type="subunit">
    <text evidence="1">Tetramer of two alpha and two beta chains.</text>
</comment>
<comment type="similarity">
    <text evidence="2">Belongs to the TrpB family.</text>
</comment>
<sequence>MTLLNSYFGSFGGMYVPQILMPALYQLESEFVLSLKNLQFKKKLANLLKNYAGRPTPLTLCRNLTKGTNTRIYLKREDLLHGGAHKTNQVLGQALLAKQMKKKEIIAETGAGQHGVAAALSCALLNLKCRIYMGIKDIERQKQNVFRMKLMGAQVIPVKSGNGTLKDACNEALRDWSENYINAHYMLGTAAGPHPYPTIVKQFQSVIGKETKQQIFEKEHCLPNSVIACVGGGSNAIGIFSSFIEDTSVNLIGVEPGGIGIHTEKHGASLICGETGIFFGMKSKVMQTHEGQIKESWSISAGLDFPAVGPEHAWLDSIKRVTYVSITDSEAVHAFQHLSKLEGIIPALESSHALAYAIKLMNNYPNKNQTLIVNISGRGDKDLKTVEKFLNK</sequence>
<reference key="1">
    <citation type="journal article" date="1995" name="Insect Mol. Biol.">
        <title>Genetics of the tryptophan biosynthetic pathway of the prokaryotic endosymbiont (Buchnera) of the aphid Schlechtendalia chinensis.</title>
        <authorList>
            <person name="Lai C.-Y."/>
            <person name="Baumann P."/>
            <person name="Moran N.A."/>
        </authorList>
    </citation>
    <scope>NUCLEOTIDE SEQUENCE [GENOMIC DNA]</scope>
</reference>
<gene>
    <name type="primary">trpB</name>
</gene>
<name>TRPB_BUCSC</name>
<evidence type="ECO:0000250" key="1"/>
<evidence type="ECO:0000305" key="2"/>
<feature type="chain" id="PRO_0000098933" description="Tryptophan synthase beta chain">
    <location>
        <begin position="1"/>
        <end position="392"/>
    </location>
</feature>
<feature type="modified residue" description="N6-(pyridoxal phosphate)lysine" evidence="1">
    <location>
        <position position="86"/>
    </location>
</feature>
<protein>
    <recommendedName>
        <fullName>Tryptophan synthase beta chain</fullName>
        <ecNumber>4.2.1.20</ecNumber>
    </recommendedName>
</protein>
<proteinExistence type="inferred from homology"/>
<accession>Q59169</accession>
<dbReference type="EC" id="4.2.1.20"/>
<dbReference type="EMBL" id="U09185">
    <property type="protein sequence ID" value="AAA92796.1"/>
    <property type="molecule type" value="Genomic_DNA"/>
</dbReference>
<dbReference type="RefSeq" id="WP_075474162.1">
    <property type="nucleotide sequence ID" value="NZ_CP011299.1"/>
</dbReference>
<dbReference type="SMR" id="Q59169"/>
<dbReference type="STRING" id="118110.XW81_01305"/>
<dbReference type="OrthoDB" id="9766131at2"/>
<dbReference type="UniPathway" id="UPA00035">
    <property type="reaction ID" value="UER00044"/>
</dbReference>
<dbReference type="GO" id="GO:0005737">
    <property type="term" value="C:cytoplasm"/>
    <property type="evidence" value="ECO:0007669"/>
    <property type="project" value="TreeGrafter"/>
</dbReference>
<dbReference type="GO" id="GO:0004834">
    <property type="term" value="F:tryptophan synthase activity"/>
    <property type="evidence" value="ECO:0007669"/>
    <property type="project" value="UniProtKB-UniRule"/>
</dbReference>
<dbReference type="CDD" id="cd06446">
    <property type="entry name" value="Trp-synth_B"/>
    <property type="match status" value="1"/>
</dbReference>
<dbReference type="FunFam" id="3.40.50.1100:FF:000001">
    <property type="entry name" value="Tryptophan synthase beta chain"/>
    <property type="match status" value="1"/>
</dbReference>
<dbReference type="FunFam" id="3.40.50.1100:FF:000004">
    <property type="entry name" value="Tryptophan synthase beta chain"/>
    <property type="match status" value="1"/>
</dbReference>
<dbReference type="Gene3D" id="3.40.50.1100">
    <property type="match status" value="2"/>
</dbReference>
<dbReference type="HAMAP" id="MF_00133">
    <property type="entry name" value="Trp_synth_beta"/>
    <property type="match status" value="1"/>
</dbReference>
<dbReference type="InterPro" id="IPR006653">
    <property type="entry name" value="Trp_synth_b_CS"/>
</dbReference>
<dbReference type="InterPro" id="IPR006654">
    <property type="entry name" value="Trp_synth_beta"/>
</dbReference>
<dbReference type="InterPro" id="IPR023026">
    <property type="entry name" value="Trp_synth_beta/beta-like"/>
</dbReference>
<dbReference type="InterPro" id="IPR001926">
    <property type="entry name" value="TrpB-like_PALP"/>
</dbReference>
<dbReference type="InterPro" id="IPR036052">
    <property type="entry name" value="TrpB-like_PALP_sf"/>
</dbReference>
<dbReference type="NCBIfam" id="TIGR00263">
    <property type="entry name" value="trpB"/>
    <property type="match status" value="1"/>
</dbReference>
<dbReference type="PANTHER" id="PTHR48077:SF3">
    <property type="entry name" value="TRYPTOPHAN SYNTHASE"/>
    <property type="match status" value="1"/>
</dbReference>
<dbReference type="PANTHER" id="PTHR48077">
    <property type="entry name" value="TRYPTOPHAN SYNTHASE-RELATED"/>
    <property type="match status" value="1"/>
</dbReference>
<dbReference type="Pfam" id="PF00291">
    <property type="entry name" value="PALP"/>
    <property type="match status" value="1"/>
</dbReference>
<dbReference type="PIRSF" id="PIRSF001413">
    <property type="entry name" value="Trp_syn_beta"/>
    <property type="match status" value="1"/>
</dbReference>
<dbReference type="SUPFAM" id="SSF53686">
    <property type="entry name" value="Tryptophan synthase beta subunit-like PLP-dependent enzymes"/>
    <property type="match status" value="1"/>
</dbReference>
<dbReference type="PROSITE" id="PS00168">
    <property type="entry name" value="TRP_SYNTHASE_BETA"/>
    <property type="match status" value="1"/>
</dbReference>
<organism>
    <name type="scientific">Buchnera aphidicola subsp. Schlechtendalia chinensis</name>
    <dbReference type="NCBI Taxonomy" id="118110"/>
    <lineage>
        <taxon>Bacteria</taxon>
        <taxon>Pseudomonadati</taxon>
        <taxon>Pseudomonadota</taxon>
        <taxon>Gammaproteobacteria</taxon>
        <taxon>Enterobacterales</taxon>
        <taxon>Erwiniaceae</taxon>
        <taxon>Buchnera</taxon>
    </lineage>
</organism>
<keyword id="KW-0028">Amino-acid biosynthesis</keyword>
<keyword id="KW-0057">Aromatic amino acid biosynthesis</keyword>
<keyword id="KW-0456">Lyase</keyword>
<keyword id="KW-0663">Pyridoxal phosphate</keyword>
<keyword id="KW-0822">Tryptophan biosynthesis</keyword>